<reference key="1">
    <citation type="journal article" date="2007" name="J. Bacteriol.">
        <title>The genome sequence of avian pathogenic Escherichia coli strain O1:K1:H7 shares strong similarities with human extraintestinal pathogenic E. coli genomes.</title>
        <authorList>
            <person name="Johnson T.J."/>
            <person name="Kariyawasam S."/>
            <person name="Wannemuehler Y."/>
            <person name="Mangiamele P."/>
            <person name="Johnson S.J."/>
            <person name="Doetkott C."/>
            <person name="Skyberg J.A."/>
            <person name="Lynne A.M."/>
            <person name="Johnson J.R."/>
            <person name="Nolan L.K."/>
        </authorList>
    </citation>
    <scope>NUCLEOTIDE SEQUENCE [LARGE SCALE GENOMIC DNA]</scope>
</reference>
<organism>
    <name type="scientific">Escherichia coli O1:K1 / APEC</name>
    <dbReference type="NCBI Taxonomy" id="405955"/>
    <lineage>
        <taxon>Bacteria</taxon>
        <taxon>Pseudomonadati</taxon>
        <taxon>Pseudomonadota</taxon>
        <taxon>Gammaproteobacteria</taxon>
        <taxon>Enterobacterales</taxon>
        <taxon>Enterobacteriaceae</taxon>
        <taxon>Escherichia</taxon>
    </lineage>
</organism>
<sequence>MEISWGRALWRNFLGQSPDWYKLALIIFLIVNPLIFLISPFVAGWLLVAEFIFTLAMALKCYPLLPGGLLAIEAVFIGMTSAEHVREEVAANLEVLLLLMFMVAGIYFMKQLLLFIFTRLLLSIRSKMLLSLSFCVAAAFLSAFLDALTVVAVVISVAVGFYGIYHRVASSRTEDTDLQDDSHIDKHYKVVLEQFRGFLRSLMMHAGVGTALGGVMTMVGEPQNLIIAKAAGWHFGDFFLRMSPVTVPVLICGLLTCLLVEKLRWFGYGETLPEKVREVLQQFDDQSRLQRTRQDKIRLIVQAIIGVWLVTALALHLAEVGLIGLSVIILATSLTGVTDEHAIGKAFTESLPFTALLTVFFSVVAVIIDQQLFSPIIQFVLQASEHAQLSLFYIFNGLLSSISDNVFVGTIYINEAKAAMKSGAITLKQYELLAVAINTGTNLPSVATPNGQAAFLFLLTSALAPLIRLSYGRMVWMALPYTLVLTLVGLLCVEFTLAPVTEWFMQMGWIATL</sequence>
<name>NHAB_ECOK1</name>
<accession>A1AAA9</accession>
<dbReference type="EMBL" id="CP000468">
    <property type="protein sequence ID" value="ABJ00599.1"/>
    <property type="molecule type" value="Genomic_DNA"/>
</dbReference>
<dbReference type="RefSeq" id="WP_000406401.1">
    <property type="nucleotide sequence ID" value="NZ_CADILS010000001.1"/>
</dbReference>
<dbReference type="SMR" id="A1AAA9"/>
<dbReference type="KEGG" id="ecv:APECO1_298"/>
<dbReference type="HOGENOM" id="CLU_041110_0_0_6"/>
<dbReference type="Proteomes" id="UP000008216">
    <property type="component" value="Chromosome"/>
</dbReference>
<dbReference type="GO" id="GO:0005886">
    <property type="term" value="C:plasma membrane"/>
    <property type="evidence" value="ECO:0007669"/>
    <property type="project" value="UniProtKB-SubCell"/>
</dbReference>
<dbReference type="GO" id="GO:0015385">
    <property type="term" value="F:sodium:proton antiporter activity"/>
    <property type="evidence" value="ECO:0007669"/>
    <property type="project" value="InterPro"/>
</dbReference>
<dbReference type="HAMAP" id="MF_01599">
    <property type="entry name" value="NhaB"/>
    <property type="match status" value="1"/>
</dbReference>
<dbReference type="InterPro" id="IPR004671">
    <property type="entry name" value="Na+/H+_antiporter_NhaB"/>
</dbReference>
<dbReference type="NCBIfam" id="TIGR00774">
    <property type="entry name" value="NhaB"/>
    <property type="match status" value="1"/>
</dbReference>
<dbReference type="NCBIfam" id="NF007093">
    <property type="entry name" value="PRK09547.1"/>
    <property type="match status" value="1"/>
</dbReference>
<dbReference type="PANTHER" id="PTHR43302:SF1">
    <property type="entry name" value="NA(+)_H(+) ANTIPORTER NHAB"/>
    <property type="match status" value="1"/>
</dbReference>
<dbReference type="PANTHER" id="PTHR43302">
    <property type="entry name" value="TRANSPORTER ARSB-RELATED"/>
    <property type="match status" value="1"/>
</dbReference>
<dbReference type="Pfam" id="PF06450">
    <property type="entry name" value="NhaB"/>
    <property type="match status" value="1"/>
</dbReference>
<keyword id="KW-0050">Antiport</keyword>
<keyword id="KW-0997">Cell inner membrane</keyword>
<keyword id="KW-1003">Cell membrane</keyword>
<keyword id="KW-0406">Ion transport</keyword>
<keyword id="KW-0472">Membrane</keyword>
<keyword id="KW-1185">Reference proteome</keyword>
<keyword id="KW-0915">Sodium</keyword>
<keyword id="KW-0739">Sodium transport</keyword>
<keyword id="KW-0812">Transmembrane</keyword>
<keyword id="KW-1133">Transmembrane helix</keyword>
<keyword id="KW-0813">Transport</keyword>
<protein>
    <recommendedName>
        <fullName evidence="1">Na(+)/H(+) antiporter NhaB</fullName>
    </recommendedName>
    <alternativeName>
        <fullName evidence="1">Sodium/proton antiporter NhaB</fullName>
    </alternativeName>
</protein>
<proteinExistence type="inferred from homology"/>
<feature type="chain" id="PRO_0000333091" description="Na(+)/H(+) antiporter NhaB">
    <location>
        <begin position="1"/>
        <end position="513"/>
    </location>
</feature>
<feature type="transmembrane region" description="Helical" evidence="1">
    <location>
        <begin position="23"/>
        <end position="43"/>
    </location>
</feature>
<feature type="transmembrane region" description="Helical" evidence="1">
    <location>
        <begin position="52"/>
        <end position="72"/>
    </location>
</feature>
<feature type="transmembrane region" description="Helical" evidence="1">
    <location>
        <begin position="97"/>
        <end position="117"/>
    </location>
</feature>
<feature type="transmembrane region" description="Helical" evidence="1">
    <location>
        <begin position="120"/>
        <end position="140"/>
    </location>
</feature>
<feature type="transmembrane region" description="Helical" evidence="1">
    <location>
        <begin position="144"/>
        <end position="164"/>
    </location>
</feature>
<feature type="transmembrane region" description="Helical" evidence="1">
    <location>
        <begin position="202"/>
        <end position="222"/>
    </location>
</feature>
<feature type="transmembrane region" description="Helical" evidence="1">
    <location>
        <begin position="238"/>
        <end position="258"/>
    </location>
</feature>
<feature type="transmembrane region" description="Helical" evidence="1">
    <location>
        <begin position="303"/>
        <end position="323"/>
    </location>
</feature>
<feature type="transmembrane region" description="Helical" evidence="1">
    <location>
        <begin position="348"/>
        <end position="368"/>
    </location>
</feature>
<feature type="transmembrane region" description="Helical" evidence="1">
    <location>
        <begin position="391"/>
        <end position="411"/>
    </location>
</feature>
<feature type="transmembrane region" description="Helical" evidence="1">
    <location>
        <begin position="447"/>
        <end position="467"/>
    </location>
</feature>
<feature type="transmembrane region" description="Helical" evidence="1">
    <location>
        <begin position="475"/>
        <end position="495"/>
    </location>
</feature>
<evidence type="ECO:0000255" key="1">
    <source>
        <dbReference type="HAMAP-Rule" id="MF_01599"/>
    </source>
</evidence>
<comment type="function">
    <text evidence="1">Na(+)/H(+) antiporter that extrudes sodium in exchange for external protons.</text>
</comment>
<comment type="catalytic activity">
    <reaction evidence="1">
        <text>2 Na(+)(in) + 3 H(+)(out) = 2 Na(+)(out) + 3 H(+)(in)</text>
        <dbReference type="Rhea" id="RHEA:29247"/>
        <dbReference type="ChEBI" id="CHEBI:15378"/>
        <dbReference type="ChEBI" id="CHEBI:29101"/>
    </reaction>
    <physiologicalReaction direction="left-to-right" evidence="1">
        <dbReference type="Rhea" id="RHEA:29248"/>
    </physiologicalReaction>
</comment>
<comment type="subcellular location">
    <subcellularLocation>
        <location evidence="1">Cell inner membrane</location>
        <topology evidence="1">Multi-pass membrane protein</topology>
    </subcellularLocation>
</comment>
<comment type="similarity">
    <text evidence="1">Belongs to the NhaB Na(+)/H(+) (TC 2.A.34) antiporter family.</text>
</comment>
<gene>
    <name evidence="1" type="primary">nhaB</name>
    <name type="ordered locus">Ecok1_11050</name>
    <name type="ORF">APECO1_298</name>
</gene>